<proteinExistence type="evidence at protein level"/>
<dbReference type="EMBL" id="AL123456">
    <property type="protein sequence ID" value="CCP44011.1"/>
    <property type="molecule type" value="Genomic_DNA"/>
</dbReference>
<dbReference type="PIR" id="G70752">
    <property type="entry name" value="G70752"/>
</dbReference>
<dbReference type="RefSeq" id="NP_215771.1">
    <property type="nucleotide sequence ID" value="NC_000962.3"/>
</dbReference>
<dbReference type="RefSeq" id="WP_003406350.1">
    <property type="nucleotide sequence ID" value="NZ_NVQJ01000049.1"/>
</dbReference>
<dbReference type="SMR" id="P9WMD5"/>
<dbReference type="STRING" id="83332.Rv1255c"/>
<dbReference type="PaxDb" id="83332-Rv1255c"/>
<dbReference type="DNASU" id="887068"/>
<dbReference type="GeneID" id="887068"/>
<dbReference type="KEGG" id="mtu:Rv1255c"/>
<dbReference type="KEGG" id="mtv:RVBD_1255c"/>
<dbReference type="TubercuList" id="Rv1255c"/>
<dbReference type="eggNOG" id="COG1309">
    <property type="taxonomic scope" value="Bacteria"/>
</dbReference>
<dbReference type="InParanoid" id="P9WMD5"/>
<dbReference type="OrthoDB" id="4541857at2"/>
<dbReference type="PhylomeDB" id="P9WMD5"/>
<dbReference type="Proteomes" id="UP000001584">
    <property type="component" value="Chromosome"/>
</dbReference>
<dbReference type="GO" id="GO:0003700">
    <property type="term" value="F:DNA-binding transcription factor activity"/>
    <property type="evidence" value="ECO:0000318"/>
    <property type="project" value="GO_Central"/>
</dbReference>
<dbReference type="GO" id="GO:0000976">
    <property type="term" value="F:transcription cis-regulatory region binding"/>
    <property type="evidence" value="ECO:0000318"/>
    <property type="project" value="GO_Central"/>
</dbReference>
<dbReference type="GO" id="GO:0006355">
    <property type="term" value="P:regulation of DNA-templated transcription"/>
    <property type="evidence" value="ECO:0000318"/>
    <property type="project" value="GO_Central"/>
</dbReference>
<dbReference type="Gene3D" id="1.10.357.10">
    <property type="entry name" value="Tetracycline Repressor, domain 2"/>
    <property type="match status" value="1"/>
</dbReference>
<dbReference type="InterPro" id="IPR009057">
    <property type="entry name" value="Homeodomain-like_sf"/>
</dbReference>
<dbReference type="InterPro" id="IPR050109">
    <property type="entry name" value="HTH-type_TetR-like_transc_reg"/>
</dbReference>
<dbReference type="InterPro" id="IPR001647">
    <property type="entry name" value="HTH_TetR"/>
</dbReference>
<dbReference type="PANTHER" id="PTHR30055">
    <property type="entry name" value="HTH-TYPE TRANSCRIPTIONAL REGULATOR RUTR"/>
    <property type="match status" value="1"/>
</dbReference>
<dbReference type="PANTHER" id="PTHR30055:SF200">
    <property type="entry name" value="HTH-TYPE TRANSCRIPTIONAL REPRESSOR BDCR"/>
    <property type="match status" value="1"/>
</dbReference>
<dbReference type="Pfam" id="PF00440">
    <property type="entry name" value="TetR_N"/>
    <property type="match status" value="1"/>
</dbReference>
<dbReference type="PRINTS" id="PR00455">
    <property type="entry name" value="HTHTETR"/>
</dbReference>
<dbReference type="SUPFAM" id="SSF46689">
    <property type="entry name" value="Homeodomain-like"/>
    <property type="match status" value="1"/>
</dbReference>
<dbReference type="PROSITE" id="PS50977">
    <property type="entry name" value="HTH_TETR_2"/>
    <property type="match status" value="1"/>
</dbReference>
<evidence type="ECO:0000255" key="1">
    <source>
        <dbReference type="PROSITE-ProRule" id="PRU00335"/>
    </source>
</evidence>
<protein>
    <recommendedName>
        <fullName>Uncharacterized HTH-type transcriptional regulator Rv1255c</fullName>
    </recommendedName>
</protein>
<keyword id="KW-0238">DNA-binding</keyword>
<keyword id="KW-1185">Reference proteome</keyword>
<keyword id="KW-0677">Repeat</keyword>
<keyword id="KW-0804">Transcription</keyword>
<keyword id="KW-0805">Transcription regulation</keyword>
<reference key="1">
    <citation type="journal article" date="1998" name="Nature">
        <title>Deciphering the biology of Mycobacterium tuberculosis from the complete genome sequence.</title>
        <authorList>
            <person name="Cole S.T."/>
            <person name="Brosch R."/>
            <person name="Parkhill J."/>
            <person name="Garnier T."/>
            <person name="Churcher C.M."/>
            <person name="Harris D.E."/>
            <person name="Gordon S.V."/>
            <person name="Eiglmeier K."/>
            <person name="Gas S."/>
            <person name="Barry C.E. III"/>
            <person name="Tekaia F."/>
            <person name="Badcock K."/>
            <person name="Basham D."/>
            <person name="Brown D."/>
            <person name="Chillingworth T."/>
            <person name="Connor R."/>
            <person name="Davies R.M."/>
            <person name="Devlin K."/>
            <person name="Feltwell T."/>
            <person name="Gentles S."/>
            <person name="Hamlin N."/>
            <person name="Holroyd S."/>
            <person name="Hornsby T."/>
            <person name="Jagels K."/>
            <person name="Krogh A."/>
            <person name="McLean J."/>
            <person name="Moule S."/>
            <person name="Murphy L.D."/>
            <person name="Oliver S."/>
            <person name="Osborne J."/>
            <person name="Quail M.A."/>
            <person name="Rajandream M.A."/>
            <person name="Rogers J."/>
            <person name="Rutter S."/>
            <person name="Seeger K."/>
            <person name="Skelton S."/>
            <person name="Squares S."/>
            <person name="Squares R."/>
            <person name="Sulston J.E."/>
            <person name="Taylor K."/>
            <person name="Whitehead S."/>
            <person name="Barrell B.G."/>
        </authorList>
    </citation>
    <scope>NUCLEOTIDE SEQUENCE [LARGE SCALE GENOMIC DNA]</scope>
    <source>
        <strain>ATCC 25618 / H37Rv</strain>
    </source>
</reference>
<reference key="2">
    <citation type="journal article" date="2011" name="Mol. Cell. Proteomics">
        <title>Proteogenomic analysis of Mycobacterium tuberculosis by high resolution mass spectrometry.</title>
        <authorList>
            <person name="Kelkar D.S."/>
            <person name="Kumar D."/>
            <person name="Kumar P."/>
            <person name="Balakrishnan L."/>
            <person name="Muthusamy B."/>
            <person name="Yadav A.K."/>
            <person name="Shrivastava P."/>
            <person name="Marimuthu A."/>
            <person name="Anand S."/>
            <person name="Sundaram H."/>
            <person name="Kingsbury R."/>
            <person name="Harsha H.C."/>
            <person name="Nair B."/>
            <person name="Prasad T.S."/>
            <person name="Chauhan D.S."/>
            <person name="Katoch K."/>
            <person name="Katoch V.M."/>
            <person name="Kumar P."/>
            <person name="Chaerkady R."/>
            <person name="Ramachandran S."/>
            <person name="Dash D."/>
            <person name="Pandey A."/>
        </authorList>
    </citation>
    <scope>IDENTIFICATION BY MASS SPECTROMETRY [LARGE SCALE ANALYSIS]</scope>
    <source>
        <strain>ATCC 25618 / H37Rv</strain>
    </source>
</reference>
<feature type="chain" id="PRO_0000070660" description="Uncharacterized HTH-type transcriptional regulator Rv1255c">
    <location>
        <begin position="1"/>
        <end position="202"/>
    </location>
</feature>
<feature type="domain" description="HTH tetR-type" evidence="1">
    <location>
        <begin position="13"/>
        <end position="73"/>
    </location>
</feature>
<feature type="DNA-binding region" description="H-T-H motif" evidence="1">
    <location>
        <begin position="36"/>
        <end position="55"/>
    </location>
</feature>
<gene>
    <name type="ordered locus">Rv1255c</name>
    <name type="ORF">MTCY50.27</name>
</gene>
<organism>
    <name type="scientific">Mycobacterium tuberculosis (strain ATCC 25618 / H37Rv)</name>
    <dbReference type="NCBI Taxonomy" id="83332"/>
    <lineage>
        <taxon>Bacteria</taxon>
        <taxon>Bacillati</taxon>
        <taxon>Actinomycetota</taxon>
        <taxon>Actinomycetes</taxon>
        <taxon>Mycobacteriales</taxon>
        <taxon>Mycobacteriaceae</taxon>
        <taxon>Mycobacterium</taxon>
        <taxon>Mycobacterium tuberculosis complex</taxon>
    </lineage>
</organism>
<accession>P9WMD5</accession>
<accession>L0T641</accession>
<accession>Q11063</accession>
<sequence>MAGTDWLSARRTELAADRILDAAERLFTQRDPASIGMNEIAKAAGCSRATLYRYFDSREALRTAYVHRETRRLGREIMVKIADVVEPAERLLVSITTTLRMVRDNPALAAWFTTTRPPIGGEMAGRSEVIAALAAAFLNSLGPDDPTTVERRARWVVRMLTSLLMFPGRDEADERAMIAEFVVPIVTPASAAARKAGHPGPE</sequence>
<name>Y1255_MYCTU</name>